<dbReference type="EMBL" id="CM000361">
    <property type="protein sequence ID" value="EDX03538.1"/>
    <property type="molecule type" value="Genomic_DNA"/>
</dbReference>
<dbReference type="SMR" id="B4Q8M1"/>
<dbReference type="STRING" id="7240.B4Q8M1"/>
<dbReference type="EnsemblMetazoa" id="FBtr0223098">
    <property type="protein sequence ID" value="FBpp0221590"/>
    <property type="gene ID" value="FBgn0194577"/>
</dbReference>
<dbReference type="EnsemblMetazoa" id="XM_016179447.3">
    <property type="protein sequence ID" value="XP_016023198.1"/>
    <property type="gene ID" value="LOC6730785"/>
</dbReference>
<dbReference type="EnsemblMetazoa" id="XM_039295126.2">
    <property type="protein sequence ID" value="XP_039151060.1"/>
    <property type="gene ID" value="LOC6730785"/>
</dbReference>
<dbReference type="GeneID" id="6730785"/>
<dbReference type="CTD" id="6227"/>
<dbReference type="HOGENOM" id="CLU_167122_2_0_1"/>
<dbReference type="OMA" id="GESDACM"/>
<dbReference type="OrthoDB" id="278325at2759"/>
<dbReference type="PhylomeDB" id="B4Q8M1"/>
<dbReference type="ChiTaRS" id="RpS21">
    <property type="organism name" value="fly"/>
</dbReference>
<dbReference type="Proteomes" id="UP000000304">
    <property type="component" value="Chromosome 2L"/>
</dbReference>
<dbReference type="Bgee" id="FBgn0194577">
    <property type="expression patterns" value="Expressed in embryo and 3 other cell types or tissues"/>
</dbReference>
<dbReference type="GO" id="GO:0022626">
    <property type="term" value="C:cytosolic ribosome"/>
    <property type="evidence" value="ECO:0007669"/>
    <property type="project" value="EnsemblMetazoa"/>
</dbReference>
<dbReference type="GO" id="GO:1990904">
    <property type="term" value="C:ribonucleoprotein complex"/>
    <property type="evidence" value="ECO:0007669"/>
    <property type="project" value="UniProtKB-KW"/>
</dbReference>
<dbReference type="GO" id="GO:0005840">
    <property type="term" value="C:ribosome"/>
    <property type="evidence" value="ECO:0000250"/>
    <property type="project" value="UniProtKB"/>
</dbReference>
<dbReference type="GO" id="GO:0005791">
    <property type="term" value="C:rough endoplasmic reticulum"/>
    <property type="evidence" value="ECO:0007669"/>
    <property type="project" value="UniProtKB-SubCell"/>
</dbReference>
<dbReference type="GO" id="GO:0043022">
    <property type="term" value="F:ribosome binding"/>
    <property type="evidence" value="ECO:0000250"/>
    <property type="project" value="UniProtKB"/>
</dbReference>
<dbReference type="GO" id="GO:0003735">
    <property type="term" value="F:structural constituent of ribosome"/>
    <property type="evidence" value="ECO:0007669"/>
    <property type="project" value="EnsemblMetazoa"/>
</dbReference>
<dbReference type="GO" id="GO:0048542">
    <property type="term" value="P:lymph gland development"/>
    <property type="evidence" value="ECO:0007669"/>
    <property type="project" value="EnsemblMetazoa"/>
</dbReference>
<dbReference type="GO" id="GO:0042127">
    <property type="term" value="P:regulation of cell population proliferation"/>
    <property type="evidence" value="ECO:0000250"/>
    <property type="project" value="UniProtKB"/>
</dbReference>
<dbReference type="GO" id="GO:0006417">
    <property type="term" value="P:regulation of translation"/>
    <property type="evidence" value="ECO:0007669"/>
    <property type="project" value="UniProtKB-KW"/>
</dbReference>
<dbReference type="GO" id="GO:0006364">
    <property type="term" value="P:rRNA processing"/>
    <property type="evidence" value="ECO:0007669"/>
    <property type="project" value="UniProtKB-KW"/>
</dbReference>
<dbReference type="GO" id="GO:0006412">
    <property type="term" value="P:translation"/>
    <property type="evidence" value="ECO:0007669"/>
    <property type="project" value="InterPro"/>
</dbReference>
<dbReference type="FunFam" id="3.30.1230.20:FF:000001">
    <property type="entry name" value="40S ribosomal protein S21"/>
    <property type="match status" value="1"/>
</dbReference>
<dbReference type="Gene3D" id="3.30.1230.20">
    <property type="match status" value="1"/>
</dbReference>
<dbReference type="InterPro" id="IPR001931">
    <property type="entry name" value="Ribosomal_eS21"/>
</dbReference>
<dbReference type="InterPro" id="IPR018279">
    <property type="entry name" value="Ribosomal_eS21_CS"/>
</dbReference>
<dbReference type="InterPro" id="IPR038579">
    <property type="entry name" value="Ribosomal_eS21_sf"/>
</dbReference>
<dbReference type="PANTHER" id="PTHR10442">
    <property type="entry name" value="40S RIBOSOMAL PROTEIN S21"/>
    <property type="match status" value="1"/>
</dbReference>
<dbReference type="Pfam" id="PF01249">
    <property type="entry name" value="Ribosomal_S21e"/>
    <property type="match status" value="1"/>
</dbReference>
<dbReference type="PIRSF" id="PIRSF002148">
    <property type="entry name" value="Ribosomal_S21e"/>
    <property type="match status" value="1"/>
</dbReference>
<dbReference type="PROSITE" id="PS00996">
    <property type="entry name" value="RIBOSOMAL_S21E"/>
    <property type="match status" value="1"/>
</dbReference>
<name>RS21_DROSI</name>
<evidence type="ECO:0000250" key="1">
    <source>
        <dbReference type="UniProtKB" id="O76927"/>
    </source>
</evidence>
<evidence type="ECO:0000250" key="2">
    <source>
        <dbReference type="UniProtKB" id="P63220"/>
    </source>
</evidence>
<evidence type="ECO:0000250" key="3">
    <source>
        <dbReference type="UniProtKB" id="P63221"/>
    </source>
</evidence>
<evidence type="ECO:0000255" key="4"/>
<evidence type="ECO:0000305" key="5"/>
<evidence type="ECO:0000312" key="6">
    <source>
        <dbReference type="EMBL" id="EDX03538.1"/>
    </source>
</evidence>
<accession>B4Q8M1</accession>
<protein>
    <recommendedName>
        <fullName evidence="5">Small ribosomal subunit protein eS21</fullName>
    </recommendedName>
    <alternativeName>
        <fullName evidence="1">40S ribosomal protein S21</fullName>
    </alternativeName>
    <alternativeName>
        <fullName evidence="1">Overgrown hematopoietic organs at 23B</fullName>
    </alternativeName>
</protein>
<keyword id="KW-0963">Cytoplasm</keyword>
<keyword id="KW-0217">Developmental protein</keyword>
<keyword id="KW-0256">Endoplasmic reticulum</keyword>
<keyword id="KW-1185">Reference proteome</keyword>
<keyword id="KW-0687">Ribonucleoprotein</keyword>
<keyword id="KW-0689">Ribosomal protein</keyword>
<keyword id="KW-0698">rRNA processing</keyword>
<keyword id="KW-0810">Translation regulation</keyword>
<feature type="chain" id="PRO_0000395423" description="Small ribosomal subunit protein eS21">
    <location>
        <begin position="1"/>
        <end position="83"/>
    </location>
</feature>
<proteinExistence type="inferred from homology"/>
<comment type="function">
    <text evidence="1">May be an associated component of the ribosome rather than a core structural subunit. May act as a translation initiation factor. Has a role in regulation of cell proliferation in the hematopoietic organs and the imaginal disks of larva (By similarity).</text>
</comment>
<comment type="subunit">
    <text evidence="1">Component of the 40S small ribosomal subunit. Interacts with sta.</text>
</comment>
<comment type="subcellular location">
    <subcellularLocation>
        <location evidence="2">Cytoplasm</location>
        <location evidence="2">Cytosol</location>
    </subcellularLocation>
    <subcellularLocation>
        <location evidence="2">Cytoplasm</location>
    </subcellularLocation>
    <subcellularLocation>
        <location evidence="3">Rough endoplasmic reticulum</location>
    </subcellularLocation>
    <text evidence="2 3">Detected on cytosolic polysomes (By similarity). Detected in ribosomes that are associated with the rough endoplasmic reticulum (By similarity).</text>
</comment>
<comment type="similarity">
    <text evidence="4">Belongs to the eukaryotic ribosomal protein eS21 family.</text>
</comment>
<gene>
    <name type="primary">RpS21</name>
    <name type="synonym">oho23B</name>
    <name type="ORF">GD23188</name>
</gene>
<sequence>MENDAGENVDLYVPRKCSASNRIIHAKDHASVQLTIVDVDPETGRQTDGSKTYAICGEIRRMGESDDCIVRLAKKDGIITKNF</sequence>
<reference evidence="6" key="1">
    <citation type="journal article" date="2007" name="Nature">
        <title>Evolution of genes and genomes on the Drosophila phylogeny.</title>
        <authorList>
            <consortium name="Drosophila 12 genomes consortium"/>
        </authorList>
    </citation>
    <scope>NUCLEOTIDE SEQUENCE [LARGE SCALE GENOMIC DNA]</scope>
</reference>
<organism>
    <name type="scientific">Drosophila simulans</name>
    <name type="common">Fruit fly</name>
    <dbReference type="NCBI Taxonomy" id="7240"/>
    <lineage>
        <taxon>Eukaryota</taxon>
        <taxon>Metazoa</taxon>
        <taxon>Ecdysozoa</taxon>
        <taxon>Arthropoda</taxon>
        <taxon>Hexapoda</taxon>
        <taxon>Insecta</taxon>
        <taxon>Pterygota</taxon>
        <taxon>Neoptera</taxon>
        <taxon>Endopterygota</taxon>
        <taxon>Diptera</taxon>
        <taxon>Brachycera</taxon>
        <taxon>Muscomorpha</taxon>
        <taxon>Ephydroidea</taxon>
        <taxon>Drosophilidae</taxon>
        <taxon>Drosophila</taxon>
        <taxon>Sophophora</taxon>
    </lineage>
</organism>